<keyword id="KW-0687">Ribonucleoprotein</keyword>
<keyword id="KW-0689">Ribosomal protein</keyword>
<protein>
    <recommendedName>
        <fullName evidence="1">Small ribosomal subunit protein uS9</fullName>
    </recommendedName>
    <alternativeName>
        <fullName evidence="2">30S ribosomal protein S9</fullName>
    </alternativeName>
</protein>
<sequence length="130" mass="14491">MAQVQYYGTGRRKSSVARVRLVPGEGRVIINGRDFENYIPFAALREVVKQPLVATETLGNYDVLVNVNGGGYTGQAGAIRHGISRALLKADPEYRLTLKRAGLLTRDARMKERKKYGLKGARRAPQFSKR</sequence>
<feature type="chain" id="PRO_1000146432" description="Small ribosomal subunit protein uS9">
    <location>
        <begin position="1"/>
        <end position="130"/>
    </location>
</feature>
<comment type="similarity">
    <text evidence="1">Belongs to the universal ribosomal protein uS9 family.</text>
</comment>
<evidence type="ECO:0000255" key="1">
    <source>
        <dbReference type="HAMAP-Rule" id="MF_00532"/>
    </source>
</evidence>
<evidence type="ECO:0000305" key="2"/>
<reference key="1">
    <citation type="submission" date="2009-02" db="EMBL/GenBank/DDBJ databases">
        <title>Genome sequence of Bacillus cereus 03BB102.</title>
        <authorList>
            <person name="Dodson R.J."/>
            <person name="Jackson P."/>
            <person name="Munk A.C."/>
            <person name="Brettin T."/>
            <person name="Bruce D."/>
            <person name="Detter C."/>
            <person name="Tapia R."/>
            <person name="Han C."/>
            <person name="Sutton G."/>
            <person name="Sims D."/>
        </authorList>
    </citation>
    <scope>NUCLEOTIDE SEQUENCE [LARGE SCALE GENOMIC DNA]</scope>
    <source>
        <strain>03BB102</strain>
    </source>
</reference>
<dbReference type="EMBL" id="CP001407">
    <property type="protein sequence ID" value="ACO27546.1"/>
    <property type="molecule type" value="Genomic_DNA"/>
</dbReference>
<dbReference type="RefSeq" id="WP_000079986.1">
    <property type="nucleotide sequence ID" value="NZ_CP009318.1"/>
</dbReference>
<dbReference type="SMR" id="C1ET73"/>
<dbReference type="GeneID" id="93010909"/>
<dbReference type="KEGG" id="bcx:BCA_0174"/>
<dbReference type="PATRIC" id="fig|572264.18.peg.208"/>
<dbReference type="Proteomes" id="UP000002210">
    <property type="component" value="Chromosome"/>
</dbReference>
<dbReference type="GO" id="GO:0022627">
    <property type="term" value="C:cytosolic small ribosomal subunit"/>
    <property type="evidence" value="ECO:0007669"/>
    <property type="project" value="TreeGrafter"/>
</dbReference>
<dbReference type="GO" id="GO:0003723">
    <property type="term" value="F:RNA binding"/>
    <property type="evidence" value="ECO:0007669"/>
    <property type="project" value="TreeGrafter"/>
</dbReference>
<dbReference type="GO" id="GO:0003735">
    <property type="term" value="F:structural constituent of ribosome"/>
    <property type="evidence" value="ECO:0007669"/>
    <property type="project" value="InterPro"/>
</dbReference>
<dbReference type="GO" id="GO:0006412">
    <property type="term" value="P:translation"/>
    <property type="evidence" value="ECO:0007669"/>
    <property type="project" value="UniProtKB-UniRule"/>
</dbReference>
<dbReference type="FunFam" id="3.30.230.10:FF:000001">
    <property type="entry name" value="30S ribosomal protein S9"/>
    <property type="match status" value="1"/>
</dbReference>
<dbReference type="Gene3D" id="3.30.230.10">
    <property type="match status" value="1"/>
</dbReference>
<dbReference type="HAMAP" id="MF_00532_B">
    <property type="entry name" value="Ribosomal_uS9_B"/>
    <property type="match status" value="1"/>
</dbReference>
<dbReference type="InterPro" id="IPR020568">
    <property type="entry name" value="Ribosomal_Su5_D2-typ_SF"/>
</dbReference>
<dbReference type="InterPro" id="IPR000754">
    <property type="entry name" value="Ribosomal_uS9"/>
</dbReference>
<dbReference type="InterPro" id="IPR023035">
    <property type="entry name" value="Ribosomal_uS9_bac/plastid"/>
</dbReference>
<dbReference type="InterPro" id="IPR020574">
    <property type="entry name" value="Ribosomal_uS9_CS"/>
</dbReference>
<dbReference type="InterPro" id="IPR014721">
    <property type="entry name" value="Ribsml_uS5_D2-typ_fold_subgr"/>
</dbReference>
<dbReference type="NCBIfam" id="NF001099">
    <property type="entry name" value="PRK00132.1"/>
    <property type="match status" value="1"/>
</dbReference>
<dbReference type="PANTHER" id="PTHR21569">
    <property type="entry name" value="RIBOSOMAL PROTEIN S9"/>
    <property type="match status" value="1"/>
</dbReference>
<dbReference type="PANTHER" id="PTHR21569:SF1">
    <property type="entry name" value="SMALL RIBOSOMAL SUBUNIT PROTEIN US9M"/>
    <property type="match status" value="1"/>
</dbReference>
<dbReference type="Pfam" id="PF00380">
    <property type="entry name" value="Ribosomal_S9"/>
    <property type="match status" value="1"/>
</dbReference>
<dbReference type="SUPFAM" id="SSF54211">
    <property type="entry name" value="Ribosomal protein S5 domain 2-like"/>
    <property type="match status" value="1"/>
</dbReference>
<dbReference type="PROSITE" id="PS00360">
    <property type="entry name" value="RIBOSOMAL_S9"/>
    <property type="match status" value="1"/>
</dbReference>
<organism>
    <name type="scientific">Bacillus cereus (strain 03BB102)</name>
    <dbReference type="NCBI Taxonomy" id="572264"/>
    <lineage>
        <taxon>Bacteria</taxon>
        <taxon>Bacillati</taxon>
        <taxon>Bacillota</taxon>
        <taxon>Bacilli</taxon>
        <taxon>Bacillales</taxon>
        <taxon>Bacillaceae</taxon>
        <taxon>Bacillus</taxon>
        <taxon>Bacillus cereus group</taxon>
    </lineage>
</organism>
<gene>
    <name evidence="1" type="primary">rpsI</name>
    <name type="ordered locus">BCA_0174</name>
</gene>
<name>RS9_BACC3</name>
<accession>C1ET73</accession>
<proteinExistence type="inferred from homology"/>